<protein>
    <recommendedName>
        <fullName evidence="1">Protein RecA</fullName>
    </recommendedName>
    <alternativeName>
        <fullName evidence="1">Recombinase A</fullName>
    </alternativeName>
</protein>
<feature type="chain" id="PRO_1000114372" description="Protein RecA">
    <location>
        <begin position="1"/>
        <end position="345"/>
    </location>
</feature>
<feature type="region of interest" description="Disordered" evidence="2">
    <location>
        <begin position="326"/>
        <end position="345"/>
    </location>
</feature>
<feature type="compositionally biased region" description="Basic and acidic residues" evidence="2">
    <location>
        <begin position="326"/>
        <end position="336"/>
    </location>
</feature>
<feature type="binding site" evidence="1">
    <location>
        <begin position="65"/>
        <end position="72"/>
    </location>
    <ligand>
        <name>ATP</name>
        <dbReference type="ChEBI" id="CHEBI:30616"/>
    </ligand>
</feature>
<name>RECA_STRMK</name>
<organism>
    <name type="scientific">Stenotrophomonas maltophilia (strain K279a)</name>
    <dbReference type="NCBI Taxonomy" id="522373"/>
    <lineage>
        <taxon>Bacteria</taxon>
        <taxon>Pseudomonadati</taxon>
        <taxon>Pseudomonadota</taxon>
        <taxon>Gammaproteobacteria</taxon>
        <taxon>Lysobacterales</taxon>
        <taxon>Lysobacteraceae</taxon>
        <taxon>Stenotrophomonas</taxon>
        <taxon>Stenotrophomonas maltophilia group</taxon>
    </lineage>
</organism>
<comment type="function">
    <text evidence="1">Can catalyze the hydrolysis of ATP in the presence of single-stranded DNA, the ATP-dependent uptake of single-stranded DNA by duplex DNA, and the ATP-dependent hybridization of homologous single-stranded DNAs. It interacts with LexA causing its activation and leading to its autocatalytic cleavage.</text>
</comment>
<comment type="subcellular location">
    <subcellularLocation>
        <location evidence="1">Cytoplasm</location>
    </subcellularLocation>
</comment>
<comment type="similarity">
    <text evidence="1">Belongs to the RecA family.</text>
</comment>
<keyword id="KW-0067">ATP-binding</keyword>
<keyword id="KW-0963">Cytoplasm</keyword>
<keyword id="KW-0227">DNA damage</keyword>
<keyword id="KW-0233">DNA recombination</keyword>
<keyword id="KW-0234">DNA repair</keyword>
<keyword id="KW-0238">DNA-binding</keyword>
<keyword id="KW-0547">Nucleotide-binding</keyword>
<keyword id="KW-1185">Reference proteome</keyword>
<keyword id="KW-0742">SOS response</keyword>
<sequence length="345" mass="37165">MDENKKRALAAALGQIEKQFGKGSVMRMGDRVVEPVEAIPTGSLMLDIALGIGGLPKGRVVEIYGPESSGKTTLTLQAIAECQKMGGTAAFIDAEHALDPIYAAKLGVNVDDLLLSQPDTGEQALEIADMLVRSGSVDILVIDSVAALTPKAEIEGEMGDQLPGLQARLMSQALRKLTGNIKRSNTLVIFINQLRMKIGVMMPGQSPETTTGGNALKFYASVRLDIRRIGAIKKGDEIIGNQTKIKVVKNKLAPPFKQVITEILYGEGISREGELIDMGVDAKLVEKAGAWYSYGEERIGQGKDNARGYLRDNPTVAAKLEAELREKFQPAEAAREEGDDEGEDE</sequence>
<accession>B2FL31</accession>
<dbReference type="EMBL" id="AM743169">
    <property type="protein sequence ID" value="CAQ45264.1"/>
    <property type="molecule type" value="Genomic_DNA"/>
</dbReference>
<dbReference type="RefSeq" id="WP_005412937.1">
    <property type="nucleotide sequence ID" value="NC_010943.1"/>
</dbReference>
<dbReference type="SMR" id="B2FL31"/>
<dbReference type="EnsemblBacteria" id="CAQ45264">
    <property type="protein sequence ID" value="CAQ45264"/>
    <property type="gene ID" value="Smlt1741"/>
</dbReference>
<dbReference type="GeneID" id="93832906"/>
<dbReference type="KEGG" id="sml:Smlt1741"/>
<dbReference type="eggNOG" id="COG0468">
    <property type="taxonomic scope" value="Bacteria"/>
</dbReference>
<dbReference type="HOGENOM" id="CLU_040469_1_2_6"/>
<dbReference type="Proteomes" id="UP000008840">
    <property type="component" value="Chromosome"/>
</dbReference>
<dbReference type="GO" id="GO:0005829">
    <property type="term" value="C:cytosol"/>
    <property type="evidence" value="ECO:0007669"/>
    <property type="project" value="TreeGrafter"/>
</dbReference>
<dbReference type="GO" id="GO:0005524">
    <property type="term" value="F:ATP binding"/>
    <property type="evidence" value="ECO:0007669"/>
    <property type="project" value="UniProtKB-UniRule"/>
</dbReference>
<dbReference type="GO" id="GO:0016887">
    <property type="term" value="F:ATP hydrolysis activity"/>
    <property type="evidence" value="ECO:0007669"/>
    <property type="project" value="InterPro"/>
</dbReference>
<dbReference type="GO" id="GO:0140664">
    <property type="term" value="F:ATP-dependent DNA damage sensor activity"/>
    <property type="evidence" value="ECO:0007669"/>
    <property type="project" value="InterPro"/>
</dbReference>
<dbReference type="GO" id="GO:0003684">
    <property type="term" value="F:damaged DNA binding"/>
    <property type="evidence" value="ECO:0007669"/>
    <property type="project" value="UniProtKB-UniRule"/>
</dbReference>
<dbReference type="GO" id="GO:0003697">
    <property type="term" value="F:single-stranded DNA binding"/>
    <property type="evidence" value="ECO:0007669"/>
    <property type="project" value="UniProtKB-UniRule"/>
</dbReference>
<dbReference type="GO" id="GO:0006310">
    <property type="term" value="P:DNA recombination"/>
    <property type="evidence" value="ECO:0007669"/>
    <property type="project" value="UniProtKB-UniRule"/>
</dbReference>
<dbReference type="GO" id="GO:0006281">
    <property type="term" value="P:DNA repair"/>
    <property type="evidence" value="ECO:0007669"/>
    <property type="project" value="UniProtKB-UniRule"/>
</dbReference>
<dbReference type="GO" id="GO:0009432">
    <property type="term" value="P:SOS response"/>
    <property type="evidence" value="ECO:0007669"/>
    <property type="project" value="UniProtKB-UniRule"/>
</dbReference>
<dbReference type="CDD" id="cd00983">
    <property type="entry name" value="RecA"/>
    <property type="match status" value="1"/>
</dbReference>
<dbReference type="FunFam" id="3.40.50.300:FF:000087">
    <property type="entry name" value="Recombinase RecA"/>
    <property type="match status" value="1"/>
</dbReference>
<dbReference type="Gene3D" id="3.40.50.300">
    <property type="entry name" value="P-loop containing nucleotide triphosphate hydrolases"/>
    <property type="match status" value="1"/>
</dbReference>
<dbReference type="HAMAP" id="MF_00268">
    <property type="entry name" value="RecA"/>
    <property type="match status" value="1"/>
</dbReference>
<dbReference type="InterPro" id="IPR003593">
    <property type="entry name" value="AAA+_ATPase"/>
</dbReference>
<dbReference type="InterPro" id="IPR013765">
    <property type="entry name" value="DNA_recomb/repair_RecA"/>
</dbReference>
<dbReference type="InterPro" id="IPR020584">
    <property type="entry name" value="DNA_recomb/repair_RecA_CS"/>
</dbReference>
<dbReference type="InterPro" id="IPR027417">
    <property type="entry name" value="P-loop_NTPase"/>
</dbReference>
<dbReference type="InterPro" id="IPR049261">
    <property type="entry name" value="RecA-like_C"/>
</dbReference>
<dbReference type="InterPro" id="IPR049428">
    <property type="entry name" value="RecA-like_N"/>
</dbReference>
<dbReference type="InterPro" id="IPR020588">
    <property type="entry name" value="RecA_ATP-bd"/>
</dbReference>
<dbReference type="InterPro" id="IPR023400">
    <property type="entry name" value="RecA_C_sf"/>
</dbReference>
<dbReference type="InterPro" id="IPR020587">
    <property type="entry name" value="RecA_monomer-monomer_interface"/>
</dbReference>
<dbReference type="NCBIfam" id="TIGR02012">
    <property type="entry name" value="tigrfam_recA"/>
    <property type="match status" value="1"/>
</dbReference>
<dbReference type="PANTHER" id="PTHR45900:SF1">
    <property type="entry name" value="MITOCHONDRIAL DNA REPAIR PROTEIN RECA HOMOLOG-RELATED"/>
    <property type="match status" value="1"/>
</dbReference>
<dbReference type="PANTHER" id="PTHR45900">
    <property type="entry name" value="RECA"/>
    <property type="match status" value="1"/>
</dbReference>
<dbReference type="Pfam" id="PF00154">
    <property type="entry name" value="RecA"/>
    <property type="match status" value="1"/>
</dbReference>
<dbReference type="Pfam" id="PF21096">
    <property type="entry name" value="RecA_C"/>
    <property type="match status" value="1"/>
</dbReference>
<dbReference type="PRINTS" id="PR00142">
    <property type="entry name" value="RECA"/>
</dbReference>
<dbReference type="SMART" id="SM00382">
    <property type="entry name" value="AAA"/>
    <property type="match status" value="1"/>
</dbReference>
<dbReference type="SUPFAM" id="SSF52540">
    <property type="entry name" value="P-loop containing nucleoside triphosphate hydrolases"/>
    <property type="match status" value="1"/>
</dbReference>
<dbReference type="SUPFAM" id="SSF54752">
    <property type="entry name" value="RecA protein, C-terminal domain"/>
    <property type="match status" value="1"/>
</dbReference>
<dbReference type="PROSITE" id="PS00321">
    <property type="entry name" value="RECA_1"/>
    <property type="match status" value="1"/>
</dbReference>
<dbReference type="PROSITE" id="PS50162">
    <property type="entry name" value="RECA_2"/>
    <property type="match status" value="1"/>
</dbReference>
<dbReference type="PROSITE" id="PS50163">
    <property type="entry name" value="RECA_3"/>
    <property type="match status" value="1"/>
</dbReference>
<gene>
    <name evidence="1" type="primary">recA</name>
    <name type="ordered locus">Smlt1741</name>
</gene>
<reference key="1">
    <citation type="journal article" date="2008" name="Genome Biol.">
        <title>The complete genome, comparative and functional analysis of Stenotrophomonas maltophilia reveals an organism heavily shielded by drug resistance determinants.</title>
        <authorList>
            <person name="Crossman L.C."/>
            <person name="Gould V.C."/>
            <person name="Dow J.M."/>
            <person name="Vernikos G.S."/>
            <person name="Okazaki A."/>
            <person name="Sebaihia M."/>
            <person name="Saunders D."/>
            <person name="Arrowsmith C."/>
            <person name="Carver T."/>
            <person name="Peters N."/>
            <person name="Adlem E."/>
            <person name="Kerhornou A."/>
            <person name="Lord A."/>
            <person name="Murphy L."/>
            <person name="Seeger K."/>
            <person name="Squares R."/>
            <person name="Rutter S."/>
            <person name="Quail M.A."/>
            <person name="Rajandream M.A."/>
            <person name="Harris D."/>
            <person name="Churcher C."/>
            <person name="Bentley S.D."/>
            <person name="Parkhill J."/>
            <person name="Thomson N.R."/>
            <person name="Avison M.B."/>
        </authorList>
    </citation>
    <scope>NUCLEOTIDE SEQUENCE [LARGE SCALE GENOMIC DNA]</scope>
    <source>
        <strain>K279a</strain>
    </source>
</reference>
<evidence type="ECO:0000255" key="1">
    <source>
        <dbReference type="HAMAP-Rule" id="MF_00268"/>
    </source>
</evidence>
<evidence type="ECO:0000256" key="2">
    <source>
        <dbReference type="SAM" id="MobiDB-lite"/>
    </source>
</evidence>
<proteinExistence type="inferred from homology"/>